<keyword id="KW-0067">ATP-binding</keyword>
<keyword id="KW-0963">Cytoplasm</keyword>
<keyword id="KW-0275">Fatty acid biosynthesis</keyword>
<keyword id="KW-0276">Fatty acid metabolism</keyword>
<keyword id="KW-0444">Lipid biosynthesis</keyword>
<keyword id="KW-0443">Lipid metabolism</keyword>
<keyword id="KW-0479">Metal-binding</keyword>
<keyword id="KW-0547">Nucleotide-binding</keyword>
<keyword id="KW-0808">Transferase</keyword>
<keyword id="KW-0862">Zinc</keyword>
<keyword id="KW-0863">Zinc-finger</keyword>
<accession>B3QL38</accession>
<dbReference type="EC" id="2.1.3.15" evidence="1"/>
<dbReference type="EMBL" id="CP001099">
    <property type="protein sequence ID" value="ACF10826.1"/>
    <property type="molecule type" value="Genomic_DNA"/>
</dbReference>
<dbReference type="RefSeq" id="WP_012501659.1">
    <property type="nucleotide sequence ID" value="NC_011027.1"/>
</dbReference>
<dbReference type="SMR" id="B3QL38"/>
<dbReference type="STRING" id="517417.Cpar_0403"/>
<dbReference type="KEGG" id="cpc:Cpar_0403"/>
<dbReference type="eggNOG" id="COG0777">
    <property type="taxonomic scope" value="Bacteria"/>
</dbReference>
<dbReference type="HOGENOM" id="CLU_015486_1_0_10"/>
<dbReference type="OrthoDB" id="9772975at2"/>
<dbReference type="UniPathway" id="UPA00655">
    <property type="reaction ID" value="UER00711"/>
</dbReference>
<dbReference type="Proteomes" id="UP000008811">
    <property type="component" value="Chromosome"/>
</dbReference>
<dbReference type="GO" id="GO:0009317">
    <property type="term" value="C:acetyl-CoA carboxylase complex"/>
    <property type="evidence" value="ECO:0007669"/>
    <property type="project" value="InterPro"/>
</dbReference>
<dbReference type="GO" id="GO:0003989">
    <property type="term" value="F:acetyl-CoA carboxylase activity"/>
    <property type="evidence" value="ECO:0007669"/>
    <property type="project" value="InterPro"/>
</dbReference>
<dbReference type="GO" id="GO:0005524">
    <property type="term" value="F:ATP binding"/>
    <property type="evidence" value="ECO:0007669"/>
    <property type="project" value="UniProtKB-KW"/>
</dbReference>
<dbReference type="GO" id="GO:0016743">
    <property type="term" value="F:carboxyl- or carbamoyltransferase activity"/>
    <property type="evidence" value="ECO:0007669"/>
    <property type="project" value="UniProtKB-UniRule"/>
</dbReference>
<dbReference type="GO" id="GO:0008270">
    <property type="term" value="F:zinc ion binding"/>
    <property type="evidence" value="ECO:0007669"/>
    <property type="project" value="UniProtKB-UniRule"/>
</dbReference>
<dbReference type="GO" id="GO:0006633">
    <property type="term" value="P:fatty acid biosynthetic process"/>
    <property type="evidence" value="ECO:0007669"/>
    <property type="project" value="UniProtKB-KW"/>
</dbReference>
<dbReference type="GO" id="GO:2001295">
    <property type="term" value="P:malonyl-CoA biosynthetic process"/>
    <property type="evidence" value="ECO:0007669"/>
    <property type="project" value="UniProtKB-UniRule"/>
</dbReference>
<dbReference type="Gene3D" id="3.90.226.10">
    <property type="entry name" value="2-enoyl-CoA Hydratase, Chain A, domain 1"/>
    <property type="match status" value="1"/>
</dbReference>
<dbReference type="HAMAP" id="MF_01395">
    <property type="entry name" value="AcetylCoA_CT_beta"/>
    <property type="match status" value="1"/>
</dbReference>
<dbReference type="InterPro" id="IPR034733">
    <property type="entry name" value="AcCoA_carboxyl_beta"/>
</dbReference>
<dbReference type="InterPro" id="IPR000438">
    <property type="entry name" value="Acetyl_CoA_COase_Trfase_b_su"/>
</dbReference>
<dbReference type="InterPro" id="IPR029045">
    <property type="entry name" value="ClpP/crotonase-like_dom_sf"/>
</dbReference>
<dbReference type="InterPro" id="IPR011762">
    <property type="entry name" value="COA_CT_N"/>
</dbReference>
<dbReference type="InterPro" id="IPR041010">
    <property type="entry name" value="Znf-ACC"/>
</dbReference>
<dbReference type="NCBIfam" id="TIGR00515">
    <property type="entry name" value="accD"/>
    <property type="match status" value="1"/>
</dbReference>
<dbReference type="PANTHER" id="PTHR42995">
    <property type="entry name" value="ACETYL-COENZYME A CARBOXYLASE CARBOXYL TRANSFERASE SUBUNIT BETA, CHLOROPLASTIC"/>
    <property type="match status" value="1"/>
</dbReference>
<dbReference type="PANTHER" id="PTHR42995:SF5">
    <property type="entry name" value="ACETYL-COENZYME A CARBOXYLASE CARBOXYL TRANSFERASE SUBUNIT BETA, CHLOROPLASTIC"/>
    <property type="match status" value="1"/>
</dbReference>
<dbReference type="Pfam" id="PF01039">
    <property type="entry name" value="Carboxyl_trans"/>
    <property type="match status" value="1"/>
</dbReference>
<dbReference type="Pfam" id="PF17848">
    <property type="entry name" value="Zn_ribbon_ACC"/>
    <property type="match status" value="1"/>
</dbReference>
<dbReference type="PRINTS" id="PR01070">
    <property type="entry name" value="ACCCTRFRASEB"/>
</dbReference>
<dbReference type="SUPFAM" id="SSF52096">
    <property type="entry name" value="ClpP/crotonase"/>
    <property type="match status" value="1"/>
</dbReference>
<dbReference type="PROSITE" id="PS50980">
    <property type="entry name" value="COA_CT_NTER"/>
    <property type="match status" value="1"/>
</dbReference>
<comment type="function">
    <text evidence="1">Component of the acetyl coenzyme A carboxylase (ACC) complex. Biotin carboxylase (BC) catalyzes the carboxylation of biotin on its carrier protein (BCCP) and then the CO(2) group is transferred by the transcarboxylase to acetyl-CoA to form malonyl-CoA.</text>
</comment>
<comment type="catalytic activity">
    <reaction evidence="1">
        <text>N(6)-carboxybiotinyl-L-lysyl-[protein] + acetyl-CoA = N(6)-biotinyl-L-lysyl-[protein] + malonyl-CoA</text>
        <dbReference type="Rhea" id="RHEA:54728"/>
        <dbReference type="Rhea" id="RHEA-COMP:10505"/>
        <dbReference type="Rhea" id="RHEA-COMP:10506"/>
        <dbReference type="ChEBI" id="CHEBI:57288"/>
        <dbReference type="ChEBI" id="CHEBI:57384"/>
        <dbReference type="ChEBI" id="CHEBI:83144"/>
        <dbReference type="ChEBI" id="CHEBI:83145"/>
        <dbReference type="EC" id="2.1.3.15"/>
    </reaction>
</comment>
<comment type="cofactor">
    <cofactor evidence="1">
        <name>Zn(2+)</name>
        <dbReference type="ChEBI" id="CHEBI:29105"/>
    </cofactor>
    <text evidence="1">Binds 1 zinc ion per subunit.</text>
</comment>
<comment type="pathway">
    <text evidence="1">Lipid metabolism; malonyl-CoA biosynthesis; malonyl-CoA from acetyl-CoA: step 1/1.</text>
</comment>
<comment type="subunit">
    <text evidence="1">Acetyl-CoA carboxylase is a heterohexamer composed of biotin carboxyl carrier protein (AccB), biotin carboxylase (AccC) and two subunits each of ACCase subunit alpha (AccA) and ACCase subunit beta (AccD).</text>
</comment>
<comment type="subcellular location">
    <subcellularLocation>
        <location evidence="1">Cytoplasm</location>
    </subcellularLocation>
</comment>
<comment type="similarity">
    <text evidence="1">Belongs to the AccD/PCCB family.</text>
</comment>
<proteinExistence type="inferred from homology"/>
<gene>
    <name evidence="1" type="primary">accD</name>
    <name type="ordered locus">Cpar_0403</name>
</gene>
<sequence length="279" mass="30903">MVWFKRGIPSIKTTDKRDTPEGLWSKCDECGAALHKKQLEDHLYTCPECGHHFRISPDLYFSFLFDDGAWDEFDGQLRAADPLTFVDTKKYPDRVRDTMQKSGKSEACRNATGSMGGSAAVISAMDFGFIGGSMGSVVGEKISRAADKSVELNAPLILISQSGGARMMEGAFSLMQMAKTSARLTRLGERNIPFISLMTDPTMGGISASYAMLGDLNISEPKALIGFAGPRVIRDTIKRDLPEGFQRAEFLKEHGFVDMIVHRKDLRLQLIKLFKHLRG</sequence>
<name>ACCD_CHLP8</name>
<organism>
    <name type="scientific">Chlorobaculum parvum (strain DSM 263 / NCIMB 8327)</name>
    <name type="common">Chlorobium vibrioforme subsp. thiosulfatophilum</name>
    <dbReference type="NCBI Taxonomy" id="517417"/>
    <lineage>
        <taxon>Bacteria</taxon>
        <taxon>Pseudomonadati</taxon>
        <taxon>Chlorobiota</taxon>
        <taxon>Chlorobiia</taxon>
        <taxon>Chlorobiales</taxon>
        <taxon>Chlorobiaceae</taxon>
        <taxon>Chlorobaculum</taxon>
    </lineage>
</organism>
<feature type="chain" id="PRO_0000389713" description="Acetyl-coenzyme A carboxylase carboxyl transferase subunit beta">
    <location>
        <begin position="1"/>
        <end position="279"/>
    </location>
</feature>
<feature type="domain" description="CoA carboxyltransferase N-terminal" evidence="2">
    <location>
        <begin position="23"/>
        <end position="279"/>
    </location>
</feature>
<feature type="zinc finger region" description="C4-type" evidence="1">
    <location>
        <begin position="27"/>
        <end position="49"/>
    </location>
</feature>
<feature type="binding site" evidence="1">
    <location>
        <position position="27"/>
    </location>
    <ligand>
        <name>Zn(2+)</name>
        <dbReference type="ChEBI" id="CHEBI:29105"/>
    </ligand>
</feature>
<feature type="binding site" evidence="1">
    <location>
        <position position="30"/>
    </location>
    <ligand>
        <name>Zn(2+)</name>
        <dbReference type="ChEBI" id="CHEBI:29105"/>
    </ligand>
</feature>
<feature type="binding site" evidence="1">
    <location>
        <position position="46"/>
    </location>
    <ligand>
        <name>Zn(2+)</name>
        <dbReference type="ChEBI" id="CHEBI:29105"/>
    </ligand>
</feature>
<feature type="binding site" evidence="1">
    <location>
        <position position="49"/>
    </location>
    <ligand>
        <name>Zn(2+)</name>
        <dbReference type="ChEBI" id="CHEBI:29105"/>
    </ligand>
</feature>
<reference key="1">
    <citation type="submission" date="2008-06" db="EMBL/GenBank/DDBJ databases">
        <title>Complete sequence of Chlorobaculum parvum NCIB 8327.</title>
        <authorList>
            <consortium name="US DOE Joint Genome Institute"/>
            <person name="Lucas S."/>
            <person name="Copeland A."/>
            <person name="Lapidus A."/>
            <person name="Glavina del Rio T."/>
            <person name="Dalin E."/>
            <person name="Tice H."/>
            <person name="Bruce D."/>
            <person name="Goodwin L."/>
            <person name="Pitluck S."/>
            <person name="Schmutz J."/>
            <person name="Larimer F."/>
            <person name="Land M."/>
            <person name="Hauser L."/>
            <person name="Kyrpides N."/>
            <person name="Mikhailova N."/>
            <person name="Zhao F."/>
            <person name="Li T."/>
            <person name="Liu Z."/>
            <person name="Overmann J."/>
            <person name="Bryant D.A."/>
            <person name="Richardson P."/>
        </authorList>
    </citation>
    <scope>NUCLEOTIDE SEQUENCE [LARGE SCALE GENOMIC DNA]</scope>
    <source>
        <strain>DSM 263 / NCIMB 8327</strain>
    </source>
</reference>
<protein>
    <recommendedName>
        <fullName evidence="1">Acetyl-coenzyme A carboxylase carboxyl transferase subunit beta</fullName>
        <shortName evidence="1">ACCase subunit beta</shortName>
        <shortName evidence="1">Acetyl-CoA carboxylase carboxyltransferase subunit beta</shortName>
        <ecNumber evidence="1">2.1.3.15</ecNumber>
    </recommendedName>
</protein>
<evidence type="ECO:0000255" key="1">
    <source>
        <dbReference type="HAMAP-Rule" id="MF_01395"/>
    </source>
</evidence>
<evidence type="ECO:0000255" key="2">
    <source>
        <dbReference type="PROSITE-ProRule" id="PRU01136"/>
    </source>
</evidence>